<proteinExistence type="inferred from homology"/>
<organism>
    <name type="scientific">Ehrlichia ruminantium (strain Gardel)</name>
    <dbReference type="NCBI Taxonomy" id="302409"/>
    <lineage>
        <taxon>Bacteria</taxon>
        <taxon>Pseudomonadati</taxon>
        <taxon>Pseudomonadota</taxon>
        <taxon>Alphaproteobacteria</taxon>
        <taxon>Rickettsiales</taxon>
        <taxon>Anaplasmataceae</taxon>
        <taxon>Ehrlichia</taxon>
    </lineage>
</organism>
<comment type="function">
    <text evidence="1">Catalyzes the attachment of proline to tRNA(Pro) in a two-step reaction: proline is first activated by ATP to form Pro-AMP and then transferred to the acceptor end of tRNA(Pro).</text>
</comment>
<comment type="catalytic activity">
    <reaction evidence="1">
        <text>tRNA(Pro) + L-proline + ATP = L-prolyl-tRNA(Pro) + AMP + diphosphate</text>
        <dbReference type="Rhea" id="RHEA:14305"/>
        <dbReference type="Rhea" id="RHEA-COMP:9700"/>
        <dbReference type="Rhea" id="RHEA-COMP:9702"/>
        <dbReference type="ChEBI" id="CHEBI:30616"/>
        <dbReference type="ChEBI" id="CHEBI:33019"/>
        <dbReference type="ChEBI" id="CHEBI:60039"/>
        <dbReference type="ChEBI" id="CHEBI:78442"/>
        <dbReference type="ChEBI" id="CHEBI:78532"/>
        <dbReference type="ChEBI" id="CHEBI:456215"/>
        <dbReference type="EC" id="6.1.1.15"/>
    </reaction>
</comment>
<comment type="subunit">
    <text evidence="1">Homodimer.</text>
</comment>
<comment type="subcellular location">
    <subcellularLocation>
        <location evidence="1">Cytoplasm</location>
    </subcellularLocation>
</comment>
<comment type="similarity">
    <text evidence="1">Belongs to the class-II aminoacyl-tRNA synthetase family. ProS type 2 subfamily.</text>
</comment>
<keyword id="KW-0030">Aminoacyl-tRNA synthetase</keyword>
<keyword id="KW-0067">ATP-binding</keyword>
<keyword id="KW-0963">Cytoplasm</keyword>
<keyword id="KW-0436">Ligase</keyword>
<keyword id="KW-0547">Nucleotide-binding</keyword>
<keyword id="KW-0648">Protein biosynthesis</keyword>
<feature type="chain" id="PRO_0000248899" description="Proline--tRNA ligase">
    <location>
        <begin position="1"/>
        <end position="426"/>
    </location>
</feature>
<dbReference type="EC" id="6.1.1.15" evidence="1"/>
<dbReference type="EMBL" id="CR925677">
    <property type="protein sequence ID" value="CAI27799.1"/>
    <property type="molecule type" value="Genomic_DNA"/>
</dbReference>
<dbReference type="RefSeq" id="WP_011255497.1">
    <property type="nucleotide sequence ID" value="NC_006831.1"/>
</dbReference>
<dbReference type="SMR" id="Q5FHL5"/>
<dbReference type="KEGG" id="erg:ERGA_CDS_03470"/>
<dbReference type="HOGENOM" id="CLU_016739_4_2_5"/>
<dbReference type="OrthoDB" id="9809052at2"/>
<dbReference type="Proteomes" id="UP000000533">
    <property type="component" value="Chromosome"/>
</dbReference>
<dbReference type="GO" id="GO:0005829">
    <property type="term" value="C:cytosol"/>
    <property type="evidence" value="ECO:0007669"/>
    <property type="project" value="TreeGrafter"/>
</dbReference>
<dbReference type="GO" id="GO:0005524">
    <property type="term" value="F:ATP binding"/>
    <property type="evidence" value="ECO:0007669"/>
    <property type="project" value="UniProtKB-UniRule"/>
</dbReference>
<dbReference type="GO" id="GO:0004827">
    <property type="term" value="F:proline-tRNA ligase activity"/>
    <property type="evidence" value="ECO:0007669"/>
    <property type="project" value="UniProtKB-UniRule"/>
</dbReference>
<dbReference type="GO" id="GO:0006433">
    <property type="term" value="P:prolyl-tRNA aminoacylation"/>
    <property type="evidence" value="ECO:0007669"/>
    <property type="project" value="UniProtKB-UniRule"/>
</dbReference>
<dbReference type="CDD" id="cd00861">
    <property type="entry name" value="ProRS_anticodon_short"/>
    <property type="match status" value="1"/>
</dbReference>
<dbReference type="CDD" id="cd00779">
    <property type="entry name" value="ProRS_core_prok"/>
    <property type="match status" value="1"/>
</dbReference>
<dbReference type="FunFam" id="3.30.930.10:FF:000042">
    <property type="entry name" value="probable proline--tRNA ligase, mitochondrial"/>
    <property type="match status" value="1"/>
</dbReference>
<dbReference type="Gene3D" id="3.40.50.800">
    <property type="entry name" value="Anticodon-binding domain"/>
    <property type="match status" value="1"/>
</dbReference>
<dbReference type="Gene3D" id="3.30.930.10">
    <property type="entry name" value="Bira Bifunctional Protein, Domain 2"/>
    <property type="match status" value="1"/>
</dbReference>
<dbReference type="HAMAP" id="MF_01570">
    <property type="entry name" value="Pro_tRNA_synth_type2"/>
    <property type="match status" value="1"/>
</dbReference>
<dbReference type="InterPro" id="IPR002314">
    <property type="entry name" value="aa-tRNA-synt_IIb"/>
</dbReference>
<dbReference type="InterPro" id="IPR006195">
    <property type="entry name" value="aa-tRNA-synth_II"/>
</dbReference>
<dbReference type="InterPro" id="IPR045864">
    <property type="entry name" value="aa-tRNA-synth_II/BPL/LPL"/>
</dbReference>
<dbReference type="InterPro" id="IPR004154">
    <property type="entry name" value="Anticodon-bd"/>
</dbReference>
<dbReference type="InterPro" id="IPR036621">
    <property type="entry name" value="Anticodon-bd_dom_sf"/>
</dbReference>
<dbReference type="InterPro" id="IPR002316">
    <property type="entry name" value="Pro-tRNA-ligase_IIa"/>
</dbReference>
<dbReference type="InterPro" id="IPR004500">
    <property type="entry name" value="Pro-tRNA-synth_IIa_bac-type"/>
</dbReference>
<dbReference type="InterPro" id="IPR050062">
    <property type="entry name" value="Pro-tRNA_synthetase"/>
</dbReference>
<dbReference type="InterPro" id="IPR023716">
    <property type="entry name" value="Prolyl-tRNA_ligase_IIa_type2"/>
</dbReference>
<dbReference type="InterPro" id="IPR044140">
    <property type="entry name" value="ProRS_anticodon_short"/>
</dbReference>
<dbReference type="InterPro" id="IPR033730">
    <property type="entry name" value="ProRS_core_prok"/>
</dbReference>
<dbReference type="NCBIfam" id="NF008979">
    <property type="entry name" value="PRK12325.1"/>
    <property type="match status" value="1"/>
</dbReference>
<dbReference type="NCBIfam" id="TIGR00409">
    <property type="entry name" value="proS_fam_II"/>
    <property type="match status" value="1"/>
</dbReference>
<dbReference type="PANTHER" id="PTHR42753">
    <property type="entry name" value="MITOCHONDRIAL RIBOSOME PROTEIN L39/PROLYL-TRNA LIGASE FAMILY MEMBER"/>
    <property type="match status" value="1"/>
</dbReference>
<dbReference type="PANTHER" id="PTHR42753:SF2">
    <property type="entry name" value="PROLINE--TRNA LIGASE"/>
    <property type="match status" value="1"/>
</dbReference>
<dbReference type="Pfam" id="PF03129">
    <property type="entry name" value="HGTP_anticodon"/>
    <property type="match status" value="1"/>
</dbReference>
<dbReference type="Pfam" id="PF00587">
    <property type="entry name" value="tRNA-synt_2b"/>
    <property type="match status" value="1"/>
</dbReference>
<dbReference type="PRINTS" id="PR01046">
    <property type="entry name" value="TRNASYNTHPRO"/>
</dbReference>
<dbReference type="SUPFAM" id="SSF52954">
    <property type="entry name" value="Class II aaRS ABD-related"/>
    <property type="match status" value="1"/>
</dbReference>
<dbReference type="SUPFAM" id="SSF55681">
    <property type="entry name" value="Class II aaRS and biotin synthetases"/>
    <property type="match status" value="1"/>
</dbReference>
<dbReference type="PROSITE" id="PS50862">
    <property type="entry name" value="AA_TRNA_LIGASE_II"/>
    <property type="match status" value="1"/>
</dbReference>
<protein>
    <recommendedName>
        <fullName evidence="1">Proline--tRNA ligase</fullName>
        <ecNumber evidence="1">6.1.1.15</ecNumber>
    </recommendedName>
    <alternativeName>
        <fullName evidence="1">Prolyl-tRNA synthetase</fullName>
        <shortName evidence="1">ProRS</shortName>
    </alternativeName>
</protein>
<accession>Q5FHL5</accession>
<name>SYP_EHRRG</name>
<gene>
    <name evidence="1" type="primary">proS</name>
    <name type="ordered locus">ERGA_CDS_03470</name>
</gene>
<evidence type="ECO:0000255" key="1">
    <source>
        <dbReference type="HAMAP-Rule" id="MF_01570"/>
    </source>
</evidence>
<sequence length="426" mass="48667">MRLSKYYIPTLKETPTDVSVTSHVYSLRSGLIRQVASGIYAWLPLGLKVLKNIENVIKEEMNKSGILEVLMPLIQPASLWQESGRYNDYGSEMLRIKDRNNREMVFGPTHEEVVTDLLRTTLTSYKNLPLILYQVQWKFRDELRPRYGIMRCREFLMKDAYSFDKDFNSAIESYNLMFKVYIQIFRRLGLTPIAVKADSGPIGGNLSHEFHILANSGESTLYYDQDIINLINNDNIDIEKIKNTYTAADDLHNSETCPIPASNIKTSKGIEIGHIFYLGDKYSKTMNAAFSQNNETQLLHMGCYGIGVSRLVGAIIEVSHDNNGIIWPEEIAPFKFSLVNVFSANKECRNISENLYAKLDSNDVLYDDTEDSTGIKFSRMDLLGMPWQVIIGKTTIEHGLIEVRQRSSKKSLLMSTEQFLNNFKKS</sequence>
<reference key="1">
    <citation type="journal article" date="2006" name="J. Bacteriol.">
        <title>Comparative genomic analysis of three strains of Ehrlichia ruminantium reveals an active process of genome size plasticity.</title>
        <authorList>
            <person name="Frutos R."/>
            <person name="Viari A."/>
            <person name="Ferraz C."/>
            <person name="Morgat A."/>
            <person name="Eychenie S."/>
            <person name="Kandassamy Y."/>
            <person name="Chantal I."/>
            <person name="Bensaid A."/>
            <person name="Coissac E."/>
            <person name="Vachiery N."/>
            <person name="Demaille J."/>
            <person name="Martinez D."/>
        </authorList>
    </citation>
    <scope>NUCLEOTIDE SEQUENCE [LARGE SCALE GENOMIC DNA]</scope>
    <source>
        <strain>Gardel</strain>
    </source>
</reference>